<name>YJQ5_SCHPO</name>
<keyword id="KW-0507">mRNA processing</keyword>
<keyword id="KW-0539">Nucleus</keyword>
<keyword id="KW-0597">Phosphoprotein</keyword>
<keyword id="KW-1185">Reference proteome</keyword>
<keyword id="KW-0694">RNA-binding</keyword>
<sequence length="301" mass="35631">MSGFYKGVAAEQETLFTTADKKLMRSTKFPASYDTKVDMKKVNIEVLKPWIATRLNELIGFEDEVVINFVYGMLEEAVEASKTSDSQNESTLDPRKVQLNLTGFLESNATAFTEELWSLIISASQNQYGIPEKFILEKKEEISKLKDRTEASKEESKTVTDHSNRRESRRESTYYDSRERNGKRTSRSTLDRKRFHDASDTERNRYGRSPSPHSRFSEKPRGERYDIRSYSRSHKERYEDRYRPTRRRERHYRTRDDEGFDEFGRSRDGRWRESRTSYREKHRYDRDALSSESDSGTQKHD</sequence>
<organism>
    <name type="scientific">Schizosaccharomyces pombe (strain 972 / ATCC 24843)</name>
    <name type="common">Fission yeast</name>
    <dbReference type="NCBI Taxonomy" id="284812"/>
    <lineage>
        <taxon>Eukaryota</taxon>
        <taxon>Fungi</taxon>
        <taxon>Dikarya</taxon>
        <taxon>Ascomycota</taxon>
        <taxon>Taphrinomycotina</taxon>
        <taxon>Schizosaccharomycetes</taxon>
        <taxon>Schizosaccharomycetales</taxon>
        <taxon>Schizosaccharomycetaceae</taxon>
        <taxon>Schizosaccharomyces</taxon>
    </lineage>
</organism>
<feature type="chain" id="PRO_0000317318" description="PWI domain-containing protein C825.05c">
    <location>
        <begin position="1"/>
        <end position="301"/>
    </location>
</feature>
<feature type="domain" description="PWI" evidence="1">
    <location>
        <begin position="26"/>
        <end position="137"/>
    </location>
</feature>
<feature type="region of interest" description="Disordered" evidence="2">
    <location>
        <begin position="145"/>
        <end position="301"/>
    </location>
</feature>
<feature type="compositionally biased region" description="Basic and acidic residues" evidence="2">
    <location>
        <begin position="145"/>
        <end position="182"/>
    </location>
</feature>
<feature type="compositionally biased region" description="Basic and acidic residues" evidence="2">
    <location>
        <begin position="189"/>
        <end position="205"/>
    </location>
</feature>
<feature type="compositionally biased region" description="Basic and acidic residues" evidence="2">
    <location>
        <begin position="215"/>
        <end position="229"/>
    </location>
</feature>
<feature type="compositionally biased region" description="Basic residues" evidence="2">
    <location>
        <begin position="244"/>
        <end position="253"/>
    </location>
</feature>
<feature type="compositionally biased region" description="Basic and acidic residues" evidence="2">
    <location>
        <begin position="254"/>
        <end position="289"/>
    </location>
</feature>
<feature type="compositionally biased region" description="Polar residues" evidence="2">
    <location>
        <begin position="290"/>
        <end position="301"/>
    </location>
</feature>
<feature type="modified residue" description="Phosphoserine" evidence="3">
    <location>
        <position position="86"/>
    </location>
</feature>
<feature type="modified residue" description="Phosphoserine" evidence="3">
    <location>
        <position position="199"/>
    </location>
</feature>
<feature type="modified residue" description="Phosphoserine" evidence="3">
    <location>
        <position position="291"/>
    </location>
</feature>
<proteinExistence type="evidence at protein level"/>
<gene>
    <name type="ORF">SPCC825.05c</name>
</gene>
<reference key="1">
    <citation type="journal article" date="2002" name="Nature">
        <title>The genome sequence of Schizosaccharomyces pombe.</title>
        <authorList>
            <person name="Wood V."/>
            <person name="Gwilliam R."/>
            <person name="Rajandream M.A."/>
            <person name="Lyne M.H."/>
            <person name="Lyne R."/>
            <person name="Stewart A."/>
            <person name="Sgouros J.G."/>
            <person name="Peat N."/>
            <person name="Hayles J."/>
            <person name="Baker S.G."/>
            <person name="Basham D."/>
            <person name="Bowman S."/>
            <person name="Brooks K."/>
            <person name="Brown D."/>
            <person name="Brown S."/>
            <person name="Chillingworth T."/>
            <person name="Churcher C.M."/>
            <person name="Collins M."/>
            <person name="Connor R."/>
            <person name="Cronin A."/>
            <person name="Davis P."/>
            <person name="Feltwell T."/>
            <person name="Fraser A."/>
            <person name="Gentles S."/>
            <person name="Goble A."/>
            <person name="Hamlin N."/>
            <person name="Harris D.E."/>
            <person name="Hidalgo J."/>
            <person name="Hodgson G."/>
            <person name="Holroyd S."/>
            <person name="Hornsby T."/>
            <person name="Howarth S."/>
            <person name="Huckle E.J."/>
            <person name="Hunt S."/>
            <person name="Jagels K."/>
            <person name="James K.D."/>
            <person name="Jones L."/>
            <person name="Jones M."/>
            <person name="Leather S."/>
            <person name="McDonald S."/>
            <person name="McLean J."/>
            <person name="Mooney P."/>
            <person name="Moule S."/>
            <person name="Mungall K.L."/>
            <person name="Murphy L.D."/>
            <person name="Niblett D."/>
            <person name="Odell C."/>
            <person name="Oliver K."/>
            <person name="O'Neil S."/>
            <person name="Pearson D."/>
            <person name="Quail M.A."/>
            <person name="Rabbinowitsch E."/>
            <person name="Rutherford K.M."/>
            <person name="Rutter S."/>
            <person name="Saunders D."/>
            <person name="Seeger K."/>
            <person name="Sharp S."/>
            <person name="Skelton J."/>
            <person name="Simmonds M.N."/>
            <person name="Squares R."/>
            <person name="Squares S."/>
            <person name="Stevens K."/>
            <person name="Taylor K."/>
            <person name="Taylor R.G."/>
            <person name="Tivey A."/>
            <person name="Walsh S.V."/>
            <person name="Warren T."/>
            <person name="Whitehead S."/>
            <person name="Woodward J.R."/>
            <person name="Volckaert G."/>
            <person name="Aert R."/>
            <person name="Robben J."/>
            <person name="Grymonprez B."/>
            <person name="Weltjens I."/>
            <person name="Vanstreels E."/>
            <person name="Rieger M."/>
            <person name="Schaefer M."/>
            <person name="Mueller-Auer S."/>
            <person name="Gabel C."/>
            <person name="Fuchs M."/>
            <person name="Duesterhoeft A."/>
            <person name="Fritzc C."/>
            <person name="Holzer E."/>
            <person name="Moestl D."/>
            <person name="Hilbert H."/>
            <person name="Borzym K."/>
            <person name="Langer I."/>
            <person name="Beck A."/>
            <person name="Lehrach H."/>
            <person name="Reinhardt R."/>
            <person name="Pohl T.M."/>
            <person name="Eger P."/>
            <person name="Zimmermann W."/>
            <person name="Wedler H."/>
            <person name="Wambutt R."/>
            <person name="Purnelle B."/>
            <person name="Goffeau A."/>
            <person name="Cadieu E."/>
            <person name="Dreano S."/>
            <person name="Gloux S."/>
            <person name="Lelaure V."/>
            <person name="Mottier S."/>
            <person name="Galibert F."/>
            <person name="Aves S.J."/>
            <person name="Xiang Z."/>
            <person name="Hunt C."/>
            <person name="Moore K."/>
            <person name="Hurst S.M."/>
            <person name="Lucas M."/>
            <person name="Rochet M."/>
            <person name="Gaillardin C."/>
            <person name="Tallada V.A."/>
            <person name="Garzon A."/>
            <person name="Thode G."/>
            <person name="Daga R.R."/>
            <person name="Cruzado L."/>
            <person name="Jimenez J."/>
            <person name="Sanchez M."/>
            <person name="del Rey F."/>
            <person name="Benito J."/>
            <person name="Dominguez A."/>
            <person name="Revuelta J.L."/>
            <person name="Moreno S."/>
            <person name="Armstrong J."/>
            <person name="Forsburg S.L."/>
            <person name="Cerutti L."/>
            <person name="Lowe T."/>
            <person name="McCombie W.R."/>
            <person name="Paulsen I."/>
            <person name="Potashkin J."/>
            <person name="Shpakovski G.V."/>
            <person name="Ussery D."/>
            <person name="Barrell B.G."/>
            <person name="Nurse P."/>
        </authorList>
    </citation>
    <scope>NUCLEOTIDE SEQUENCE [LARGE SCALE GENOMIC DNA]</scope>
    <source>
        <strain>972 / ATCC 24843</strain>
    </source>
</reference>
<reference key="2">
    <citation type="journal article" date="2008" name="J. Proteome Res.">
        <title>Phosphoproteome analysis of fission yeast.</title>
        <authorList>
            <person name="Wilson-Grady J.T."/>
            <person name="Villen J."/>
            <person name="Gygi S.P."/>
        </authorList>
    </citation>
    <scope>PHOSPHORYLATION [LARGE SCALE ANALYSIS] AT SER-86; SER-199 AND SER-291</scope>
    <scope>IDENTIFICATION BY MASS SPECTROMETRY</scope>
</reference>
<accession>Q9USH5</accession>
<evidence type="ECO:0000255" key="1">
    <source>
        <dbReference type="PROSITE-ProRule" id="PRU00627"/>
    </source>
</evidence>
<evidence type="ECO:0000256" key="2">
    <source>
        <dbReference type="SAM" id="MobiDB-lite"/>
    </source>
</evidence>
<evidence type="ECO:0000269" key="3">
    <source>
    </source>
</evidence>
<dbReference type="EMBL" id="CU329672">
    <property type="protein sequence ID" value="CAB58413.1"/>
    <property type="molecule type" value="Genomic_DNA"/>
</dbReference>
<dbReference type="PIR" id="T41626">
    <property type="entry name" value="T41626"/>
</dbReference>
<dbReference type="SMR" id="Q9USH5"/>
<dbReference type="BioGRID" id="276022">
    <property type="interactions" value="8"/>
</dbReference>
<dbReference type="FunCoup" id="Q9USH5">
    <property type="interactions" value="95"/>
</dbReference>
<dbReference type="STRING" id="284812.Q9USH5"/>
<dbReference type="iPTMnet" id="Q9USH5"/>
<dbReference type="PaxDb" id="4896-SPCC825.05c.1"/>
<dbReference type="EnsemblFungi" id="SPCC825.05c.1">
    <property type="protein sequence ID" value="SPCC825.05c.1:pep"/>
    <property type="gene ID" value="SPCC825.05c"/>
</dbReference>
<dbReference type="KEGG" id="spo:2539459"/>
<dbReference type="PomBase" id="SPCC825.05c"/>
<dbReference type="VEuPathDB" id="FungiDB:SPCC825.05c"/>
<dbReference type="eggNOG" id="KOG2146">
    <property type="taxonomic scope" value="Eukaryota"/>
</dbReference>
<dbReference type="HOGENOM" id="CLU_924890_0_0_1"/>
<dbReference type="InParanoid" id="Q9USH5"/>
<dbReference type="PhylomeDB" id="Q9USH5"/>
<dbReference type="PRO" id="PR:Q9USH5"/>
<dbReference type="Proteomes" id="UP000002485">
    <property type="component" value="Chromosome III"/>
</dbReference>
<dbReference type="GO" id="GO:0005681">
    <property type="term" value="C:spliceosomal complex"/>
    <property type="evidence" value="ECO:0000266"/>
    <property type="project" value="PomBase"/>
</dbReference>
<dbReference type="GO" id="GO:0003723">
    <property type="term" value="F:RNA binding"/>
    <property type="evidence" value="ECO:0007669"/>
    <property type="project" value="UniProtKB-KW"/>
</dbReference>
<dbReference type="GO" id="GO:0045292">
    <property type="term" value="P:mRNA cis splicing, via spliceosome"/>
    <property type="evidence" value="ECO:0000315"/>
    <property type="project" value="PomBase"/>
</dbReference>
<dbReference type="Gene3D" id="1.20.1390.10">
    <property type="entry name" value="PWI domain"/>
    <property type="match status" value="1"/>
</dbReference>
<dbReference type="InterPro" id="IPR002483">
    <property type="entry name" value="PWI_dom"/>
</dbReference>
<dbReference type="InterPro" id="IPR036483">
    <property type="entry name" value="PWI_dom_sf"/>
</dbReference>
<dbReference type="InterPro" id="IPR052225">
    <property type="entry name" value="Ser/Arg_repetitive_matrix"/>
</dbReference>
<dbReference type="PANTHER" id="PTHR23148">
    <property type="entry name" value="SERINE/ARGININE REGULATED NUCLEAR MATRIX PROTEIN"/>
    <property type="match status" value="1"/>
</dbReference>
<dbReference type="PANTHER" id="PTHR23148:SF0">
    <property type="entry name" value="SERINE_ARGININE REPETITIVE MATRIX PROTEIN 1"/>
    <property type="match status" value="1"/>
</dbReference>
<dbReference type="Pfam" id="PF01480">
    <property type="entry name" value="PWI"/>
    <property type="match status" value="1"/>
</dbReference>
<dbReference type="SMART" id="SM00311">
    <property type="entry name" value="PWI"/>
    <property type="match status" value="1"/>
</dbReference>
<dbReference type="SUPFAM" id="SSF101233">
    <property type="entry name" value="PWI domain"/>
    <property type="match status" value="1"/>
</dbReference>
<dbReference type="PROSITE" id="PS51025">
    <property type="entry name" value="PWI"/>
    <property type="match status" value="1"/>
</dbReference>
<comment type="subcellular location">
    <subcellularLocation>
        <location evidence="1">Nucleus</location>
    </subcellularLocation>
</comment>
<protein>
    <recommendedName>
        <fullName>PWI domain-containing protein C825.05c</fullName>
    </recommendedName>
</protein>